<proteinExistence type="inferred from homology"/>
<organism>
    <name type="scientific">Deinococcus radiodurans (strain ATCC 13939 / DSM 20539 / JCM 16871 / CCUG 27074 / LMG 4051 / NBRC 15346 / NCIMB 9279 / VKM B-1422 / R1)</name>
    <dbReference type="NCBI Taxonomy" id="243230"/>
    <lineage>
        <taxon>Bacteria</taxon>
        <taxon>Thermotogati</taxon>
        <taxon>Deinococcota</taxon>
        <taxon>Deinococci</taxon>
        <taxon>Deinococcales</taxon>
        <taxon>Deinococcaceae</taxon>
        <taxon>Deinococcus</taxon>
    </lineage>
</organism>
<accession>Q9RYZ2</accession>
<name>Y2861_DEIRA</name>
<feature type="chain" id="PRO_0000155192" description="Uncharacterized protein DR_A0161">
    <location>
        <begin position="1"/>
        <end position="222"/>
    </location>
</feature>
<evidence type="ECO:0000250" key="1"/>
<evidence type="ECO:0000305" key="2"/>
<dbReference type="EMBL" id="AE001825">
    <property type="protein sequence ID" value="AAF12203.1"/>
    <property type="molecule type" value="Genomic_DNA"/>
</dbReference>
<dbReference type="PIR" id="D75612">
    <property type="entry name" value="D75612"/>
</dbReference>
<dbReference type="RefSeq" id="NP_285485.1">
    <property type="nucleotide sequence ID" value="NC_001264.1"/>
</dbReference>
<dbReference type="RefSeq" id="WP_010889421.1">
    <property type="nucleotide sequence ID" value="NC_001264.1"/>
</dbReference>
<dbReference type="SMR" id="Q9RYZ2"/>
<dbReference type="STRING" id="243230.DR_A0161"/>
<dbReference type="PaxDb" id="243230-DR_A0161"/>
<dbReference type="EnsemblBacteria" id="AAF12203">
    <property type="protein sequence ID" value="AAF12203"/>
    <property type="gene ID" value="DR_A0161"/>
</dbReference>
<dbReference type="KEGG" id="dra:DR_A0161"/>
<dbReference type="PATRIC" id="fig|243230.17.peg.3048"/>
<dbReference type="eggNOG" id="COG0704">
    <property type="taxonomic scope" value="Bacteria"/>
</dbReference>
<dbReference type="HOGENOM" id="CLU_078518_1_0_0"/>
<dbReference type="InParanoid" id="Q9RYZ2"/>
<dbReference type="OrthoDB" id="74058at2"/>
<dbReference type="Proteomes" id="UP000002524">
    <property type="component" value="Chromosome 2"/>
</dbReference>
<dbReference type="GO" id="GO:0005737">
    <property type="term" value="C:cytoplasm"/>
    <property type="evidence" value="ECO:0007669"/>
    <property type="project" value="UniProtKB-SubCell"/>
</dbReference>
<dbReference type="GO" id="GO:0030643">
    <property type="term" value="P:intracellular phosphate ion homeostasis"/>
    <property type="evidence" value="ECO:0007669"/>
    <property type="project" value="InterPro"/>
</dbReference>
<dbReference type="GO" id="GO:0045936">
    <property type="term" value="P:negative regulation of phosphate metabolic process"/>
    <property type="evidence" value="ECO:0007669"/>
    <property type="project" value="InterPro"/>
</dbReference>
<dbReference type="Gene3D" id="1.20.58.220">
    <property type="entry name" value="Phosphate transport system protein phou homolog 2, domain 2"/>
    <property type="match status" value="1"/>
</dbReference>
<dbReference type="InterPro" id="IPR028366">
    <property type="entry name" value="P_transport_PhoU"/>
</dbReference>
<dbReference type="InterPro" id="IPR038078">
    <property type="entry name" value="PhoU-like_sf"/>
</dbReference>
<dbReference type="InterPro" id="IPR026022">
    <property type="entry name" value="PhoU_dom"/>
</dbReference>
<dbReference type="NCBIfam" id="TIGR02135">
    <property type="entry name" value="phoU_full"/>
    <property type="match status" value="1"/>
</dbReference>
<dbReference type="PANTHER" id="PTHR42930">
    <property type="entry name" value="PHOSPHATE-SPECIFIC TRANSPORT SYSTEM ACCESSORY PROTEIN PHOU"/>
    <property type="match status" value="1"/>
</dbReference>
<dbReference type="PANTHER" id="PTHR42930:SF3">
    <property type="entry name" value="PHOSPHATE-SPECIFIC TRANSPORT SYSTEM ACCESSORY PROTEIN PHOU"/>
    <property type="match status" value="1"/>
</dbReference>
<dbReference type="Pfam" id="PF01895">
    <property type="entry name" value="PhoU"/>
    <property type="match status" value="2"/>
</dbReference>
<dbReference type="SUPFAM" id="SSF109755">
    <property type="entry name" value="PhoU-like"/>
    <property type="match status" value="1"/>
</dbReference>
<sequence length="222" mass="23893">MSAGSLGGRSRLDEQLERMTADFLSMQDTLAGQLRALQAAFAQGDTSVREEVERLDRDIDAANARIEGEALHLLARQSPVAHDLKLTLLILQSTPDLERAGDYAKHVARRLSALRAGTAGHPSEFAQALALLLQMATTLRAASSPMNAALAHEVRALDDQVDALYDRAVEQVLAGRPDAALADTLEASHAWRAAERLGDHLVNVAQRTERLLARPAPSDAPA</sequence>
<protein>
    <recommendedName>
        <fullName>Uncharacterized protein DR_A0161</fullName>
    </recommendedName>
</protein>
<comment type="function">
    <text evidence="1">Not known; probably involved in phosphate transport and/or metabolism.</text>
</comment>
<comment type="subcellular location">
    <subcellularLocation>
        <location evidence="1">Cytoplasm</location>
    </subcellularLocation>
</comment>
<comment type="similarity">
    <text evidence="2">Belongs to the PhoU family.</text>
</comment>
<reference key="1">
    <citation type="journal article" date="1999" name="Science">
        <title>Genome sequence of the radioresistant bacterium Deinococcus radiodurans R1.</title>
        <authorList>
            <person name="White O."/>
            <person name="Eisen J.A."/>
            <person name="Heidelberg J.F."/>
            <person name="Hickey E.K."/>
            <person name="Peterson J.D."/>
            <person name="Dodson R.J."/>
            <person name="Haft D.H."/>
            <person name="Gwinn M.L."/>
            <person name="Nelson W.C."/>
            <person name="Richardson D.L."/>
            <person name="Moffat K.S."/>
            <person name="Qin H."/>
            <person name="Jiang L."/>
            <person name="Pamphile W."/>
            <person name="Crosby M."/>
            <person name="Shen M."/>
            <person name="Vamathevan J.J."/>
            <person name="Lam P."/>
            <person name="McDonald L.A."/>
            <person name="Utterback T.R."/>
            <person name="Zalewski C."/>
            <person name="Makarova K.S."/>
            <person name="Aravind L."/>
            <person name="Daly M.J."/>
            <person name="Minton K.W."/>
            <person name="Fleischmann R.D."/>
            <person name="Ketchum K.A."/>
            <person name="Nelson K.E."/>
            <person name="Salzberg S.L."/>
            <person name="Smith H.O."/>
            <person name="Venter J.C."/>
            <person name="Fraser C.M."/>
        </authorList>
    </citation>
    <scope>NUCLEOTIDE SEQUENCE [LARGE SCALE GENOMIC DNA]</scope>
    <source>
        <strain>ATCC 13939 / DSM 20539 / JCM 16871 / CCUG 27074 / LMG 4051 / NBRC 15346 / NCIMB 9279 / VKM B-1422 / R1</strain>
    </source>
</reference>
<gene>
    <name type="ordered locus">DR_A0161</name>
</gene>
<keyword id="KW-0963">Cytoplasm</keyword>
<keyword id="KW-1185">Reference proteome</keyword>